<reference key="1">
    <citation type="submission" date="2005-10" db="EMBL/GenBank/DDBJ databases">
        <title>Complete sequence of chromosome 1 of Burkholderia sp. 383.</title>
        <authorList>
            <consortium name="US DOE Joint Genome Institute"/>
            <person name="Copeland A."/>
            <person name="Lucas S."/>
            <person name="Lapidus A."/>
            <person name="Barry K."/>
            <person name="Detter J.C."/>
            <person name="Glavina T."/>
            <person name="Hammon N."/>
            <person name="Israni S."/>
            <person name="Pitluck S."/>
            <person name="Chain P."/>
            <person name="Malfatti S."/>
            <person name="Shin M."/>
            <person name="Vergez L."/>
            <person name="Schmutz J."/>
            <person name="Larimer F."/>
            <person name="Land M."/>
            <person name="Kyrpides N."/>
            <person name="Lykidis A."/>
            <person name="Richardson P."/>
        </authorList>
    </citation>
    <scope>NUCLEOTIDE SEQUENCE [LARGE SCALE GENOMIC DNA]</scope>
    <source>
        <strain>ATCC 17760 / DSM 23089 / LMG 22485 / NCIMB 9086 / R18194 / 383</strain>
    </source>
</reference>
<protein>
    <recommendedName>
        <fullName evidence="1">Iron-sulfur cluster assembly protein CyaY</fullName>
    </recommendedName>
</protein>
<name>CYAY_BURL3</name>
<dbReference type="EMBL" id="CP000151">
    <property type="protein sequence ID" value="ABB07087.1"/>
    <property type="molecule type" value="Genomic_DNA"/>
</dbReference>
<dbReference type="RefSeq" id="WP_011350690.1">
    <property type="nucleotide sequence ID" value="NC_007510.1"/>
</dbReference>
<dbReference type="SMR" id="Q39KC9"/>
<dbReference type="GeneID" id="45093402"/>
<dbReference type="KEGG" id="bur:Bcep18194_A3485"/>
<dbReference type="PATRIC" id="fig|482957.22.peg.327"/>
<dbReference type="HOGENOM" id="CLU_080880_3_0_4"/>
<dbReference type="Proteomes" id="UP000002705">
    <property type="component" value="Chromosome 1"/>
</dbReference>
<dbReference type="GO" id="GO:0005829">
    <property type="term" value="C:cytosol"/>
    <property type="evidence" value="ECO:0007669"/>
    <property type="project" value="TreeGrafter"/>
</dbReference>
<dbReference type="GO" id="GO:0008199">
    <property type="term" value="F:ferric iron binding"/>
    <property type="evidence" value="ECO:0007669"/>
    <property type="project" value="InterPro"/>
</dbReference>
<dbReference type="GO" id="GO:0008198">
    <property type="term" value="F:ferrous iron binding"/>
    <property type="evidence" value="ECO:0007669"/>
    <property type="project" value="TreeGrafter"/>
</dbReference>
<dbReference type="GO" id="GO:0016226">
    <property type="term" value="P:iron-sulfur cluster assembly"/>
    <property type="evidence" value="ECO:0007669"/>
    <property type="project" value="UniProtKB-UniRule"/>
</dbReference>
<dbReference type="CDD" id="cd00503">
    <property type="entry name" value="Frataxin"/>
    <property type="match status" value="1"/>
</dbReference>
<dbReference type="Gene3D" id="3.30.920.10">
    <property type="entry name" value="Frataxin/CyaY"/>
    <property type="match status" value="1"/>
</dbReference>
<dbReference type="HAMAP" id="MF_00142">
    <property type="entry name" value="CyaY"/>
    <property type="match status" value="1"/>
</dbReference>
<dbReference type="InterPro" id="IPR047584">
    <property type="entry name" value="CyaY"/>
</dbReference>
<dbReference type="InterPro" id="IPR002908">
    <property type="entry name" value="Frataxin/CyaY"/>
</dbReference>
<dbReference type="InterPro" id="IPR036524">
    <property type="entry name" value="Frataxin/CyaY_sf"/>
</dbReference>
<dbReference type="InterPro" id="IPR020895">
    <property type="entry name" value="Frataxin_CS"/>
</dbReference>
<dbReference type="NCBIfam" id="TIGR03421">
    <property type="entry name" value="FeS_CyaY"/>
    <property type="match status" value="1"/>
</dbReference>
<dbReference type="PANTHER" id="PTHR16821">
    <property type="entry name" value="FRATAXIN"/>
    <property type="match status" value="1"/>
</dbReference>
<dbReference type="PANTHER" id="PTHR16821:SF2">
    <property type="entry name" value="FRATAXIN, MITOCHONDRIAL"/>
    <property type="match status" value="1"/>
</dbReference>
<dbReference type="Pfam" id="PF01491">
    <property type="entry name" value="Frataxin_Cyay"/>
    <property type="match status" value="1"/>
</dbReference>
<dbReference type="SMART" id="SM01219">
    <property type="entry name" value="Frataxin_Cyay"/>
    <property type="match status" value="1"/>
</dbReference>
<dbReference type="SUPFAM" id="SSF55387">
    <property type="entry name" value="Frataxin/Nqo15-like"/>
    <property type="match status" value="1"/>
</dbReference>
<dbReference type="PROSITE" id="PS01344">
    <property type="entry name" value="FRATAXIN_1"/>
    <property type="match status" value="1"/>
</dbReference>
<dbReference type="PROSITE" id="PS50810">
    <property type="entry name" value="FRATAXIN_2"/>
    <property type="match status" value="1"/>
</dbReference>
<comment type="function">
    <text evidence="1">Involved in iron-sulfur (Fe-S) cluster assembly. May act as a regulator of Fe-S biogenesis.</text>
</comment>
<comment type="similarity">
    <text evidence="1">Belongs to the frataxin family.</text>
</comment>
<gene>
    <name evidence="1" type="primary">cyaY</name>
    <name type="ordered locus">Bcep18194_A3485</name>
</gene>
<feature type="chain" id="PRO_1000010921" description="Iron-sulfur cluster assembly protein CyaY">
    <location>
        <begin position="1"/>
        <end position="109"/>
    </location>
</feature>
<accession>Q39KC9</accession>
<organism>
    <name type="scientific">Burkholderia lata (strain ATCC 17760 / DSM 23089 / LMG 22485 / NCIMB 9086 / R18194 / 383)</name>
    <dbReference type="NCBI Taxonomy" id="482957"/>
    <lineage>
        <taxon>Bacteria</taxon>
        <taxon>Pseudomonadati</taxon>
        <taxon>Pseudomonadota</taxon>
        <taxon>Betaproteobacteria</taxon>
        <taxon>Burkholderiales</taxon>
        <taxon>Burkholderiaceae</taxon>
        <taxon>Burkholderia</taxon>
        <taxon>Burkholderia cepacia complex</taxon>
    </lineage>
</organism>
<proteinExistence type="inferred from homology"/>
<keyword id="KW-0408">Iron</keyword>
<keyword id="KW-0479">Metal-binding</keyword>
<evidence type="ECO:0000255" key="1">
    <source>
        <dbReference type="HAMAP-Rule" id="MF_00142"/>
    </source>
</evidence>
<sequence length="109" mass="12111">MSDTEYLTRAEAVLAAVERTVDDANDGDHDIDLERNGSVLTLTFENGSKIIVNLQPPMKEVWIAAKAGGFHYRFIDGEWRDTRTGTEFFSALTEYATQQAGLPITFNAP</sequence>